<feature type="chain" id="PRO_0000414500" description="Release factor glutamine methyltransferase">
    <location>
        <begin position="1"/>
        <end position="283"/>
    </location>
</feature>
<feature type="binding site" evidence="1">
    <location>
        <begin position="121"/>
        <end position="125"/>
    </location>
    <ligand>
        <name>S-adenosyl-L-methionine</name>
        <dbReference type="ChEBI" id="CHEBI:59789"/>
    </ligand>
</feature>
<feature type="binding site" evidence="1">
    <location>
        <position position="144"/>
    </location>
    <ligand>
        <name>S-adenosyl-L-methionine</name>
        <dbReference type="ChEBI" id="CHEBI:59789"/>
    </ligand>
</feature>
<feature type="binding site" evidence="1">
    <location>
        <begin position="188"/>
        <end position="191"/>
    </location>
    <ligand>
        <name>substrate</name>
    </ligand>
</feature>
<feature type="binding site" evidence="1">
    <location>
        <position position="188"/>
    </location>
    <ligand>
        <name>S-adenosyl-L-methionine</name>
        <dbReference type="ChEBI" id="CHEBI:59789"/>
    </ligand>
</feature>
<gene>
    <name evidence="1" type="primary">prmC</name>
    <name type="ordered locus">BC_5328</name>
</gene>
<evidence type="ECO:0000255" key="1">
    <source>
        <dbReference type="HAMAP-Rule" id="MF_02126"/>
    </source>
</evidence>
<sequence>MRVYEALKWASSFLQENGRDENAGEIVLCHVLKVNRTGLLMNMREEITEEQEKSFTEFIHKHVEGIPIQYMIGYEIFYGRSFFVNEEVLIPRPETEELIVGVLERIERHFGDEKLHVADIGTGSGAISITLALENKNLHVYTVDIAQESIEVAKENAKALGAEVTFYHGDLLSPFHKTGQKLDVVVSNPPYIPEEDWRGLSPVVKEHEPKRALVGGEDGLDFYRRFMEELPNVLQKKAIVAFEIGVGQGEDVKRLLQQAFPHAHVEVVFDINGKDRMVFAEME</sequence>
<proteinExistence type="inferred from homology"/>
<dbReference type="EC" id="2.1.1.297" evidence="1"/>
<dbReference type="EMBL" id="AE016877">
    <property type="protein sequence ID" value="AAP12191.1"/>
    <property type="molecule type" value="Genomic_DNA"/>
</dbReference>
<dbReference type="RefSeq" id="NP_834990.1">
    <property type="nucleotide sequence ID" value="NC_004722.1"/>
</dbReference>
<dbReference type="RefSeq" id="WP_001267061.1">
    <property type="nucleotide sequence ID" value="NZ_CP138336.1"/>
</dbReference>
<dbReference type="SMR" id="Q814U1"/>
<dbReference type="STRING" id="226900.BC_5328"/>
<dbReference type="KEGG" id="bce:BC5328"/>
<dbReference type="PATRIC" id="fig|226900.8.peg.5501"/>
<dbReference type="HOGENOM" id="CLU_018398_3_2_9"/>
<dbReference type="OrthoDB" id="9800643at2"/>
<dbReference type="Proteomes" id="UP000001417">
    <property type="component" value="Chromosome"/>
</dbReference>
<dbReference type="GO" id="GO:0003676">
    <property type="term" value="F:nucleic acid binding"/>
    <property type="evidence" value="ECO:0007669"/>
    <property type="project" value="InterPro"/>
</dbReference>
<dbReference type="GO" id="GO:0102559">
    <property type="term" value="F:protein-(glutamine-N5) methyltransferase activity"/>
    <property type="evidence" value="ECO:0007669"/>
    <property type="project" value="UniProtKB-EC"/>
</dbReference>
<dbReference type="GO" id="GO:0036009">
    <property type="term" value="F:protein-glutamine N-methyltransferase activity"/>
    <property type="evidence" value="ECO:0000318"/>
    <property type="project" value="GO_Central"/>
</dbReference>
<dbReference type="GO" id="GO:0032259">
    <property type="term" value="P:methylation"/>
    <property type="evidence" value="ECO:0007669"/>
    <property type="project" value="UniProtKB-KW"/>
</dbReference>
<dbReference type="GO" id="GO:0006415">
    <property type="term" value="P:translational termination"/>
    <property type="evidence" value="ECO:0000318"/>
    <property type="project" value="GO_Central"/>
</dbReference>
<dbReference type="CDD" id="cd02440">
    <property type="entry name" value="AdoMet_MTases"/>
    <property type="match status" value="1"/>
</dbReference>
<dbReference type="Gene3D" id="1.10.8.10">
    <property type="entry name" value="DNA helicase RuvA subunit, C-terminal domain"/>
    <property type="match status" value="1"/>
</dbReference>
<dbReference type="Gene3D" id="3.40.50.150">
    <property type="entry name" value="Vaccinia Virus protein VP39"/>
    <property type="match status" value="1"/>
</dbReference>
<dbReference type="HAMAP" id="MF_02126">
    <property type="entry name" value="RF_methyltr_PrmC"/>
    <property type="match status" value="1"/>
</dbReference>
<dbReference type="InterPro" id="IPR002052">
    <property type="entry name" value="DNA_methylase_N6_adenine_CS"/>
</dbReference>
<dbReference type="InterPro" id="IPR004556">
    <property type="entry name" value="HemK-like"/>
</dbReference>
<dbReference type="InterPro" id="IPR050320">
    <property type="entry name" value="N5-glutamine_MTase"/>
</dbReference>
<dbReference type="InterPro" id="IPR040758">
    <property type="entry name" value="PrmC_N"/>
</dbReference>
<dbReference type="InterPro" id="IPR019874">
    <property type="entry name" value="RF_methyltr_PrmC"/>
</dbReference>
<dbReference type="InterPro" id="IPR029063">
    <property type="entry name" value="SAM-dependent_MTases_sf"/>
</dbReference>
<dbReference type="InterPro" id="IPR007848">
    <property type="entry name" value="Small_mtfrase_dom"/>
</dbReference>
<dbReference type="NCBIfam" id="TIGR00536">
    <property type="entry name" value="hemK_fam"/>
    <property type="match status" value="1"/>
</dbReference>
<dbReference type="NCBIfam" id="TIGR03534">
    <property type="entry name" value="RF_mod_PrmC"/>
    <property type="match status" value="1"/>
</dbReference>
<dbReference type="PANTHER" id="PTHR18895">
    <property type="entry name" value="HEMK METHYLTRANSFERASE"/>
    <property type="match status" value="1"/>
</dbReference>
<dbReference type="PANTHER" id="PTHR18895:SF74">
    <property type="entry name" value="MTRF1L RELEASE FACTOR GLUTAMINE METHYLTRANSFERASE"/>
    <property type="match status" value="1"/>
</dbReference>
<dbReference type="Pfam" id="PF05175">
    <property type="entry name" value="MTS"/>
    <property type="match status" value="1"/>
</dbReference>
<dbReference type="Pfam" id="PF17827">
    <property type="entry name" value="PrmC_N"/>
    <property type="match status" value="1"/>
</dbReference>
<dbReference type="SUPFAM" id="SSF53335">
    <property type="entry name" value="S-adenosyl-L-methionine-dependent methyltransferases"/>
    <property type="match status" value="1"/>
</dbReference>
<comment type="function">
    <text evidence="1">Methylates the class 1 translation termination release factors RF1/PrfA and RF2/PrfB on the glutamine residue of the universally conserved GGQ motif.</text>
</comment>
<comment type="catalytic activity">
    <reaction evidence="1">
        <text>L-glutaminyl-[peptide chain release factor] + S-adenosyl-L-methionine = N(5)-methyl-L-glutaminyl-[peptide chain release factor] + S-adenosyl-L-homocysteine + H(+)</text>
        <dbReference type="Rhea" id="RHEA:42896"/>
        <dbReference type="Rhea" id="RHEA-COMP:10271"/>
        <dbReference type="Rhea" id="RHEA-COMP:10272"/>
        <dbReference type="ChEBI" id="CHEBI:15378"/>
        <dbReference type="ChEBI" id="CHEBI:30011"/>
        <dbReference type="ChEBI" id="CHEBI:57856"/>
        <dbReference type="ChEBI" id="CHEBI:59789"/>
        <dbReference type="ChEBI" id="CHEBI:61891"/>
        <dbReference type="EC" id="2.1.1.297"/>
    </reaction>
</comment>
<comment type="similarity">
    <text evidence="1">Belongs to the protein N5-glutamine methyltransferase family. PrmC subfamily.</text>
</comment>
<protein>
    <recommendedName>
        <fullName evidence="1">Release factor glutamine methyltransferase</fullName>
        <shortName evidence="1">RF MTase</shortName>
        <ecNumber evidence="1">2.1.1.297</ecNumber>
    </recommendedName>
    <alternativeName>
        <fullName evidence="1">N5-glutamine methyltransferase PrmC</fullName>
    </alternativeName>
    <alternativeName>
        <fullName evidence="1">Protein-(glutamine-N5) MTase PrmC</fullName>
    </alternativeName>
    <alternativeName>
        <fullName evidence="1">Protein-glutamine N-methyltransferase PrmC</fullName>
    </alternativeName>
</protein>
<reference key="1">
    <citation type="journal article" date="2003" name="Nature">
        <title>Genome sequence of Bacillus cereus and comparative analysis with Bacillus anthracis.</title>
        <authorList>
            <person name="Ivanova N."/>
            <person name="Sorokin A."/>
            <person name="Anderson I."/>
            <person name="Galleron N."/>
            <person name="Candelon B."/>
            <person name="Kapatral V."/>
            <person name="Bhattacharyya A."/>
            <person name="Reznik G."/>
            <person name="Mikhailova N."/>
            <person name="Lapidus A."/>
            <person name="Chu L."/>
            <person name="Mazur M."/>
            <person name="Goltsman E."/>
            <person name="Larsen N."/>
            <person name="D'Souza M."/>
            <person name="Walunas T."/>
            <person name="Grechkin Y."/>
            <person name="Pusch G."/>
            <person name="Haselkorn R."/>
            <person name="Fonstein M."/>
            <person name="Ehrlich S.D."/>
            <person name="Overbeek R."/>
            <person name="Kyrpides N.C."/>
        </authorList>
    </citation>
    <scope>NUCLEOTIDE SEQUENCE [LARGE SCALE GENOMIC DNA]</scope>
    <source>
        <strain>ATCC 14579 / DSM 31 / CCUG 7414 / JCM 2152 / NBRC 15305 / NCIMB 9373 / NCTC 2599 / NRRL B-3711</strain>
    </source>
</reference>
<organism>
    <name type="scientific">Bacillus cereus (strain ATCC 14579 / DSM 31 / CCUG 7414 / JCM 2152 / NBRC 15305 / NCIMB 9373 / NCTC 2599 / NRRL B-3711)</name>
    <dbReference type="NCBI Taxonomy" id="226900"/>
    <lineage>
        <taxon>Bacteria</taxon>
        <taxon>Bacillati</taxon>
        <taxon>Bacillota</taxon>
        <taxon>Bacilli</taxon>
        <taxon>Bacillales</taxon>
        <taxon>Bacillaceae</taxon>
        <taxon>Bacillus</taxon>
        <taxon>Bacillus cereus group</taxon>
    </lineage>
</organism>
<accession>Q814U1</accession>
<name>PRMC_BACCR</name>
<keyword id="KW-0489">Methyltransferase</keyword>
<keyword id="KW-1185">Reference proteome</keyword>
<keyword id="KW-0949">S-adenosyl-L-methionine</keyword>
<keyword id="KW-0808">Transferase</keyword>